<name>CH60_RAOPL</name>
<evidence type="ECO:0000255" key="1">
    <source>
        <dbReference type="HAMAP-Rule" id="MF_00600"/>
    </source>
</evidence>
<gene>
    <name evidence="1" type="primary">groEL</name>
    <name evidence="1" type="synonym">groL</name>
    <name type="synonym">mopA</name>
</gene>
<comment type="function">
    <text evidence="1">Together with its co-chaperonin GroES, plays an essential role in assisting protein folding. The GroEL-GroES system forms a nano-cage that allows encapsulation of the non-native substrate proteins and provides a physical environment optimized to promote and accelerate protein folding.</text>
</comment>
<comment type="catalytic activity">
    <reaction evidence="1">
        <text>ATP + H2O + a folded polypeptide = ADP + phosphate + an unfolded polypeptide.</text>
        <dbReference type="EC" id="5.6.1.7"/>
    </reaction>
</comment>
<comment type="subunit">
    <text evidence="1">Forms a cylinder of 14 subunits composed of two heptameric rings stacked back-to-back. Interacts with the co-chaperonin GroES.</text>
</comment>
<comment type="subcellular location">
    <subcellularLocation>
        <location evidence="1">Cytoplasm</location>
    </subcellularLocation>
</comment>
<comment type="similarity">
    <text evidence="1">Belongs to the chaperonin (HSP60) family.</text>
</comment>
<reference key="1">
    <citation type="journal article" date="1997" name="J. Gen. Appl. Microbiol.">
        <title>Phylogenetical relationship based on groE genes among phenotypically related Enterobacter, Pantoea, Klebsiella, Serratia, and Erwinia species.</title>
        <authorList>
            <person name="Harada H."/>
            <person name="Ishikawa H."/>
        </authorList>
    </citation>
    <scope>NUCLEOTIDE SEQUENCE [GENOMIC DNA]</scope>
    <source>
        <strain>ATCC 33531 / DSM 3069 / NBRC 14939 / NCIMB 11885 / NCTC 12998 / JCM 7251 / V-236</strain>
    </source>
</reference>
<sequence>MAAKDVKFGNDARVKMLRGVNVLADAVKVTLGPKGRNVVLDKSFGAPTITKDGVSVAREIELEDKFENMGAQMVKEVASKANDAAGDGTTTATVLAQSIITEGLKAVAAGMNPMDLKRGIDKAVAAAVEELKTLSVPCSDSKAIAQVGTISANSDETVGKLIAEAMDKVGKEGVITVEDGTGLQDELDVVEGMQFDRGYLSPYFINKPETGAVELESPFILLADKKISNIREMLPVLEAVAKAGKPLLIIAEDVEGEALATLVVNTMRGIVKVAAVKAPGFGDRRKAMLQDIATLTGGTVISEEIGMELEKSTLEDLGQAKRVVINKDTTTIIDGVGEESAIQGRVTQIRQQIEEATSDYDREKLQERVAKLAGGVAVIKVGAATEVEMKEKKARVEDALHATRAAVEEGVVAGGGVALIRVASKIAELKGQNEDQNVGIKVALRAMESPLRQIVLNCGEEPSVVANTVKSGDGNYGYNAATEEYGNMIDMGILDPTKVTRSALQYAASVAGLMITTECMVTDLPKGDAPDLGAAGGMGG</sequence>
<accession>O66212</accession>
<organism>
    <name type="scientific">Raoultella planticola</name>
    <name type="common">Klebsiella planticola</name>
    <dbReference type="NCBI Taxonomy" id="575"/>
    <lineage>
        <taxon>Bacteria</taxon>
        <taxon>Pseudomonadati</taxon>
        <taxon>Pseudomonadota</taxon>
        <taxon>Gammaproteobacteria</taxon>
        <taxon>Enterobacterales</taxon>
        <taxon>Enterobacteriaceae</taxon>
        <taxon>Klebsiella/Raoultella group</taxon>
        <taxon>Raoultella</taxon>
    </lineage>
</organism>
<dbReference type="EC" id="5.6.1.7" evidence="1"/>
<dbReference type="EMBL" id="AB008148">
    <property type="protein sequence ID" value="BAA25229.1"/>
    <property type="molecule type" value="Genomic_DNA"/>
</dbReference>
<dbReference type="SMR" id="O66212"/>
<dbReference type="GO" id="GO:0005737">
    <property type="term" value="C:cytoplasm"/>
    <property type="evidence" value="ECO:0007669"/>
    <property type="project" value="UniProtKB-SubCell"/>
</dbReference>
<dbReference type="GO" id="GO:0005524">
    <property type="term" value="F:ATP binding"/>
    <property type="evidence" value="ECO:0007669"/>
    <property type="project" value="UniProtKB-KW"/>
</dbReference>
<dbReference type="GO" id="GO:0140662">
    <property type="term" value="F:ATP-dependent protein folding chaperone"/>
    <property type="evidence" value="ECO:0007669"/>
    <property type="project" value="InterPro"/>
</dbReference>
<dbReference type="GO" id="GO:0016853">
    <property type="term" value="F:isomerase activity"/>
    <property type="evidence" value="ECO:0007669"/>
    <property type="project" value="UniProtKB-KW"/>
</dbReference>
<dbReference type="GO" id="GO:0042026">
    <property type="term" value="P:protein refolding"/>
    <property type="evidence" value="ECO:0007669"/>
    <property type="project" value="InterPro"/>
</dbReference>
<dbReference type="CDD" id="cd03344">
    <property type="entry name" value="GroEL"/>
    <property type="match status" value="1"/>
</dbReference>
<dbReference type="FunFam" id="1.10.560.10:FF:000001">
    <property type="entry name" value="60 kDa chaperonin"/>
    <property type="match status" value="1"/>
</dbReference>
<dbReference type="FunFam" id="3.50.7.10:FF:000001">
    <property type="entry name" value="60 kDa chaperonin"/>
    <property type="match status" value="1"/>
</dbReference>
<dbReference type="Gene3D" id="3.50.7.10">
    <property type="entry name" value="GroEL"/>
    <property type="match status" value="1"/>
</dbReference>
<dbReference type="Gene3D" id="1.10.560.10">
    <property type="entry name" value="GroEL-like equatorial domain"/>
    <property type="match status" value="1"/>
</dbReference>
<dbReference type="Gene3D" id="3.30.260.10">
    <property type="entry name" value="TCP-1-like chaperonin intermediate domain"/>
    <property type="match status" value="1"/>
</dbReference>
<dbReference type="HAMAP" id="MF_00600">
    <property type="entry name" value="CH60"/>
    <property type="match status" value="1"/>
</dbReference>
<dbReference type="InterPro" id="IPR018370">
    <property type="entry name" value="Chaperonin_Cpn60_CS"/>
</dbReference>
<dbReference type="InterPro" id="IPR001844">
    <property type="entry name" value="Cpn60/GroEL"/>
</dbReference>
<dbReference type="InterPro" id="IPR002423">
    <property type="entry name" value="Cpn60/GroEL/TCP-1"/>
</dbReference>
<dbReference type="InterPro" id="IPR027409">
    <property type="entry name" value="GroEL-like_apical_dom_sf"/>
</dbReference>
<dbReference type="InterPro" id="IPR027413">
    <property type="entry name" value="GROEL-like_equatorial_sf"/>
</dbReference>
<dbReference type="InterPro" id="IPR027410">
    <property type="entry name" value="TCP-1-like_intermed_sf"/>
</dbReference>
<dbReference type="NCBIfam" id="TIGR02348">
    <property type="entry name" value="GroEL"/>
    <property type="match status" value="1"/>
</dbReference>
<dbReference type="NCBIfam" id="NF000592">
    <property type="entry name" value="PRK00013.1"/>
    <property type="match status" value="1"/>
</dbReference>
<dbReference type="NCBIfam" id="NF009487">
    <property type="entry name" value="PRK12849.1"/>
    <property type="match status" value="1"/>
</dbReference>
<dbReference type="NCBIfam" id="NF009488">
    <property type="entry name" value="PRK12850.1"/>
    <property type="match status" value="1"/>
</dbReference>
<dbReference type="NCBIfam" id="NF009489">
    <property type="entry name" value="PRK12851.1"/>
    <property type="match status" value="1"/>
</dbReference>
<dbReference type="PANTHER" id="PTHR45633">
    <property type="entry name" value="60 KDA HEAT SHOCK PROTEIN, MITOCHONDRIAL"/>
    <property type="match status" value="1"/>
</dbReference>
<dbReference type="Pfam" id="PF00118">
    <property type="entry name" value="Cpn60_TCP1"/>
    <property type="match status" value="1"/>
</dbReference>
<dbReference type="PRINTS" id="PR00298">
    <property type="entry name" value="CHAPERONIN60"/>
</dbReference>
<dbReference type="SUPFAM" id="SSF52029">
    <property type="entry name" value="GroEL apical domain-like"/>
    <property type="match status" value="1"/>
</dbReference>
<dbReference type="SUPFAM" id="SSF48592">
    <property type="entry name" value="GroEL equatorial domain-like"/>
    <property type="match status" value="1"/>
</dbReference>
<dbReference type="SUPFAM" id="SSF54849">
    <property type="entry name" value="GroEL-intermediate domain like"/>
    <property type="match status" value="1"/>
</dbReference>
<dbReference type="PROSITE" id="PS00296">
    <property type="entry name" value="CHAPERONINS_CPN60"/>
    <property type="match status" value="1"/>
</dbReference>
<keyword id="KW-0067">ATP-binding</keyword>
<keyword id="KW-0143">Chaperone</keyword>
<keyword id="KW-0963">Cytoplasm</keyword>
<keyword id="KW-0413">Isomerase</keyword>
<keyword id="KW-0547">Nucleotide-binding</keyword>
<proteinExistence type="inferred from homology"/>
<feature type="chain" id="PRO_0000063395" description="Chaperonin GroEL">
    <location>
        <begin position="1"/>
        <end position="540" status="greater than"/>
    </location>
</feature>
<feature type="binding site" evidence="1">
    <location>
        <begin position="30"/>
        <end position="33"/>
    </location>
    <ligand>
        <name>ATP</name>
        <dbReference type="ChEBI" id="CHEBI:30616"/>
    </ligand>
</feature>
<feature type="binding site" evidence="1">
    <location>
        <position position="51"/>
    </location>
    <ligand>
        <name>ATP</name>
        <dbReference type="ChEBI" id="CHEBI:30616"/>
    </ligand>
</feature>
<feature type="binding site" evidence="1">
    <location>
        <begin position="87"/>
        <end position="91"/>
    </location>
    <ligand>
        <name>ATP</name>
        <dbReference type="ChEBI" id="CHEBI:30616"/>
    </ligand>
</feature>
<feature type="binding site" evidence="1">
    <location>
        <position position="415"/>
    </location>
    <ligand>
        <name>ATP</name>
        <dbReference type="ChEBI" id="CHEBI:30616"/>
    </ligand>
</feature>
<feature type="binding site" evidence="1">
    <location>
        <begin position="479"/>
        <end position="481"/>
    </location>
    <ligand>
        <name>ATP</name>
        <dbReference type="ChEBI" id="CHEBI:30616"/>
    </ligand>
</feature>
<feature type="binding site" evidence="1">
    <location>
        <position position="495"/>
    </location>
    <ligand>
        <name>ATP</name>
        <dbReference type="ChEBI" id="CHEBI:30616"/>
    </ligand>
</feature>
<feature type="non-terminal residue">
    <location>
        <position position="540"/>
    </location>
</feature>
<protein>
    <recommendedName>
        <fullName evidence="1">Chaperonin GroEL</fullName>
        <ecNumber evidence="1">5.6.1.7</ecNumber>
    </recommendedName>
    <alternativeName>
        <fullName evidence="1">60 kDa chaperonin</fullName>
    </alternativeName>
    <alternativeName>
        <fullName evidence="1">Chaperonin-60</fullName>
        <shortName evidence="1">Cpn60</shortName>
    </alternativeName>
</protein>